<protein>
    <recommendedName>
        <fullName evidence="1">Photosystem II reaction center protein I</fullName>
        <shortName evidence="1">PSII-I</shortName>
    </recommendedName>
    <alternativeName>
        <fullName evidence="1">PSII 4.8 kDa protein</fullName>
    </alternativeName>
</protein>
<dbReference type="EMBL" id="AP009368">
    <property type="protein sequence ID" value="BAF49923.1"/>
    <property type="molecule type" value="Genomic_DNA"/>
</dbReference>
<dbReference type="RefSeq" id="YP_001123099.1">
    <property type="nucleotide sequence ID" value="NC_009267.1"/>
</dbReference>
<dbReference type="SMR" id="A4QJZ6"/>
<dbReference type="GeneID" id="4962377"/>
<dbReference type="GO" id="GO:0009535">
    <property type="term" value="C:chloroplast thylakoid membrane"/>
    <property type="evidence" value="ECO:0007669"/>
    <property type="project" value="UniProtKB-SubCell"/>
</dbReference>
<dbReference type="GO" id="GO:0009539">
    <property type="term" value="C:photosystem II reaction center"/>
    <property type="evidence" value="ECO:0007669"/>
    <property type="project" value="InterPro"/>
</dbReference>
<dbReference type="GO" id="GO:0015979">
    <property type="term" value="P:photosynthesis"/>
    <property type="evidence" value="ECO:0007669"/>
    <property type="project" value="UniProtKB-UniRule"/>
</dbReference>
<dbReference type="HAMAP" id="MF_01316">
    <property type="entry name" value="PSII_PsbI"/>
    <property type="match status" value="1"/>
</dbReference>
<dbReference type="InterPro" id="IPR003686">
    <property type="entry name" value="PSII_PsbI"/>
</dbReference>
<dbReference type="InterPro" id="IPR037271">
    <property type="entry name" value="PSII_PsbI_sf"/>
</dbReference>
<dbReference type="NCBIfam" id="NF002735">
    <property type="entry name" value="PRK02655.1"/>
    <property type="match status" value="1"/>
</dbReference>
<dbReference type="PANTHER" id="PTHR35772">
    <property type="entry name" value="PHOTOSYSTEM II REACTION CENTER PROTEIN I"/>
    <property type="match status" value="1"/>
</dbReference>
<dbReference type="PANTHER" id="PTHR35772:SF1">
    <property type="entry name" value="PHOTOSYSTEM II REACTION CENTER PROTEIN I"/>
    <property type="match status" value="1"/>
</dbReference>
<dbReference type="Pfam" id="PF02532">
    <property type="entry name" value="PsbI"/>
    <property type="match status" value="1"/>
</dbReference>
<dbReference type="SUPFAM" id="SSF161041">
    <property type="entry name" value="Photosystem II reaction center protein I, PsbI"/>
    <property type="match status" value="1"/>
</dbReference>
<geneLocation type="chloroplast"/>
<evidence type="ECO:0000255" key="1">
    <source>
        <dbReference type="HAMAP-Rule" id="MF_01316"/>
    </source>
</evidence>
<name>PSBI_OLIPU</name>
<organism>
    <name type="scientific">Olimarabidopsis pumila</name>
    <name type="common">Dwarf rocket</name>
    <name type="synonym">Arabidopsis griffithiana</name>
    <dbReference type="NCBI Taxonomy" id="74718"/>
    <lineage>
        <taxon>Eukaryota</taxon>
        <taxon>Viridiplantae</taxon>
        <taxon>Streptophyta</taxon>
        <taxon>Embryophyta</taxon>
        <taxon>Tracheophyta</taxon>
        <taxon>Spermatophyta</taxon>
        <taxon>Magnoliopsida</taxon>
        <taxon>eudicotyledons</taxon>
        <taxon>Gunneridae</taxon>
        <taxon>Pentapetalae</taxon>
        <taxon>rosids</taxon>
        <taxon>malvids</taxon>
        <taxon>Brassicales</taxon>
        <taxon>Brassicaceae</taxon>
        <taxon>Alyssopsideae</taxon>
        <taxon>Olimarabidopsis</taxon>
    </lineage>
</organism>
<feature type="chain" id="PRO_0000298324" description="Photosystem II reaction center protein I">
    <location>
        <begin position="1"/>
        <end position="36"/>
    </location>
</feature>
<feature type="transmembrane region" description="Helical" evidence="1">
    <location>
        <begin position="4"/>
        <end position="24"/>
    </location>
</feature>
<comment type="function">
    <text evidence="1">One of the components of the core complex of photosystem II (PSII), required for its stability and/or assembly. PSII is a light-driven water:plastoquinone oxidoreductase that uses light energy to abstract electrons from H(2)O, generating O(2) and a proton gradient subsequently used for ATP formation. It consists of a core antenna complex that captures photons, and an electron transfer chain that converts photonic excitation into a charge separation.</text>
</comment>
<comment type="subunit">
    <text evidence="1">PSII is composed of 1 copy each of membrane proteins PsbA, PsbB, PsbC, PsbD, PsbE, PsbF, PsbH, PsbI, PsbJ, PsbK, PsbL, PsbM, PsbT, PsbX, PsbY, PsbZ, Psb30/Ycf12, at least 3 peripheral proteins of the oxygen-evolving complex and a large number of cofactors. It forms dimeric complexes.</text>
</comment>
<comment type="subcellular location">
    <subcellularLocation>
        <location evidence="1">Plastid</location>
        <location evidence="1">Chloroplast thylakoid membrane</location>
        <topology evidence="1">Single-pass membrane protein</topology>
    </subcellularLocation>
</comment>
<comment type="similarity">
    <text evidence="1">Belongs to the PsbI family.</text>
</comment>
<gene>
    <name evidence="1" type="primary">psbI</name>
</gene>
<keyword id="KW-0150">Chloroplast</keyword>
<keyword id="KW-0472">Membrane</keyword>
<keyword id="KW-0602">Photosynthesis</keyword>
<keyword id="KW-0604">Photosystem II</keyword>
<keyword id="KW-0934">Plastid</keyword>
<keyword id="KW-0674">Reaction center</keyword>
<keyword id="KW-0793">Thylakoid</keyword>
<keyword id="KW-0812">Transmembrane</keyword>
<keyword id="KW-1133">Transmembrane helix</keyword>
<proteinExistence type="inferred from homology"/>
<reference key="1">
    <citation type="submission" date="2007-03" db="EMBL/GenBank/DDBJ databases">
        <title>Sequence analysis of Arabidopsis pumila JS2 chloroplast DNA.</title>
        <authorList>
            <person name="Hosouchi T."/>
            <person name="Tsuruoka H."/>
            <person name="Kotani H."/>
        </authorList>
    </citation>
    <scope>NUCLEOTIDE SEQUENCE [LARGE SCALE GENOMIC DNA]</scope>
</reference>
<sequence>MLTLKLFVYTVVIFFVSLFIFGFLSNDPGRNPGREE</sequence>
<accession>A4QJZ6</accession>